<evidence type="ECO:0000250" key="1"/>
<evidence type="ECO:0000305" key="2"/>
<protein>
    <recommendedName>
        <fullName>Mitotic-spindle organizing protein 1</fullName>
    </recommendedName>
    <alternativeName>
        <fullName>Mitotic-spindle organizing protein associated with a ring of gamma-tubulin 1</fullName>
    </alternativeName>
</protein>
<keyword id="KW-0963">Cytoplasm</keyword>
<keyword id="KW-0206">Cytoskeleton</keyword>
<keyword id="KW-1185">Reference proteome</keyword>
<comment type="function">
    <text evidence="1">Required for gamma-tubulin complex recruitment to the centrosome.</text>
</comment>
<comment type="subunit">
    <text evidence="1">Part of the gamma-tubulin complex.</text>
</comment>
<comment type="subcellular location">
    <subcellularLocation>
        <location evidence="1">Cytoplasm</location>
        <location evidence="1">Cytoskeleton</location>
        <location evidence="1">Microtubule organizing center</location>
        <location evidence="1">Centrosome</location>
    </subcellularLocation>
    <subcellularLocation>
        <location evidence="1">Cytoplasm</location>
        <location evidence="1">Cytoskeleton</location>
        <location evidence="1">Spindle</location>
    </subcellularLocation>
</comment>
<comment type="similarity">
    <text evidence="2">Belongs to the MOZART1 family.</text>
</comment>
<reference key="1">
    <citation type="submission" date="2006-07" db="EMBL/GenBank/DDBJ databases">
        <authorList>
            <consortium name="NIH - Xenopus Gene Collection (XGC) project"/>
        </authorList>
    </citation>
    <scope>NUCLEOTIDE SEQUENCE [LARGE SCALE MRNA]</scope>
    <source>
        <strain>N6</strain>
        <tissue>Ovary</tissue>
    </source>
</reference>
<name>MZT1_XENTR</name>
<accession>Q0VFD6</accession>
<feature type="chain" id="PRO_0000337018" description="Mitotic-spindle organizing protein 1">
    <location>
        <begin position="1"/>
        <end position="72"/>
    </location>
</feature>
<gene>
    <name type="primary">mzt1</name>
    <name type="synonym">mozart1</name>
</gene>
<organism>
    <name type="scientific">Xenopus tropicalis</name>
    <name type="common">Western clawed frog</name>
    <name type="synonym">Silurana tropicalis</name>
    <dbReference type="NCBI Taxonomy" id="8364"/>
    <lineage>
        <taxon>Eukaryota</taxon>
        <taxon>Metazoa</taxon>
        <taxon>Chordata</taxon>
        <taxon>Craniata</taxon>
        <taxon>Vertebrata</taxon>
        <taxon>Euteleostomi</taxon>
        <taxon>Amphibia</taxon>
        <taxon>Batrachia</taxon>
        <taxon>Anura</taxon>
        <taxon>Pipoidea</taxon>
        <taxon>Pipidae</taxon>
        <taxon>Xenopodinae</taxon>
        <taxon>Xenopus</taxon>
        <taxon>Silurana</taxon>
    </lineage>
</organism>
<sequence>MANASGSMSAVRETMDVLLEISRLLNTGLDMETLSICVRLCEQGINPEALSSVIKELRRASETLKASESTAS</sequence>
<dbReference type="EMBL" id="BC118868">
    <property type="protein sequence ID" value="AAI18869.1"/>
    <property type="molecule type" value="mRNA"/>
</dbReference>
<dbReference type="SMR" id="Q0VFD6"/>
<dbReference type="FunCoup" id="Q0VFD6">
    <property type="interactions" value="659"/>
</dbReference>
<dbReference type="STRING" id="8364.ENSXETP00000004492"/>
<dbReference type="PaxDb" id="8364-ENSXETP00000052973"/>
<dbReference type="eggNOG" id="ENOG502S6UI">
    <property type="taxonomic scope" value="Eukaryota"/>
</dbReference>
<dbReference type="HOGENOM" id="CLU_160285_0_0_1"/>
<dbReference type="InParanoid" id="Q0VFD6"/>
<dbReference type="TreeFam" id="TF328444"/>
<dbReference type="Proteomes" id="UP000008143">
    <property type="component" value="Unplaced"/>
</dbReference>
<dbReference type="Bgee" id="ENSXETG00000024541">
    <property type="expression patterns" value="Expressed in egg cell and 13 other cell types or tissues"/>
</dbReference>
<dbReference type="GO" id="GO:0005813">
    <property type="term" value="C:centrosome"/>
    <property type="evidence" value="ECO:0000250"/>
    <property type="project" value="UniProtKB"/>
</dbReference>
<dbReference type="GO" id="GO:0005737">
    <property type="term" value="C:cytoplasm"/>
    <property type="evidence" value="ECO:0007669"/>
    <property type="project" value="UniProtKB-KW"/>
</dbReference>
<dbReference type="GO" id="GO:0000931">
    <property type="term" value="C:gamma-tubulin ring complex"/>
    <property type="evidence" value="ECO:0000250"/>
    <property type="project" value="UniProtKB"/>
</dbReference>
<dbReference type="GO" id="GO:0005819">
    <property type="term" value="C:spindle"/>
    <property type="evidence" value="ECO:0000250"/>
    <property type="project" value="UniProtKB"/>
</dbReference>
<dbReference type="GO" id="GO:0033566">
    <property type="term" value="P:gamma-tubulin complex localization"/>
    <property type="evidence" value="ECO:0000250"/>
    <property type="project" value="UniProtKB"/>
</dbReference>
<dbReference type="InterPro" id="IPR022214">
    <property type="entry name" value="MZT1"/>
</dbReference>
<dbReference type="PANTHER" id="PTHR28520">
    <property type="entry name" value="MITOTIC-SPINDLE ORGANIZING PROTEIN 1"/>
    <property type="match status" value="1"/>
</dbReference>
<dbReference type="PANTHER" id="PTHR28520:SF2">
    <property type="entry name" value="MITOTIC-SPINDLE ORGANIZING PROTEIN 1"/>
    <property type="match status" value="1"/>
</dbReference>
<dbReference type="Pfam" id="PF12554">
    <property type="entry name" value="MOZART1"/>
    <property type="match status" value="1"/>
</dbReference>
<proteinExistence type="inferred from homology"/>